<feature type="chain" id="PRO_1000009914" description="Uracil-DNA glycosylase">
    <location>
        <begin position="1"/>
        <end position="227"/>
    </location>
</feature>
<feature type="active site" description="Proton acceptor" evidence="1">
    <location>
        <position position="68"/>
    </location>
</feature>
<name>UNG_MYCSJ</name>
<proteinExistence type="inferred from homology"/>
<comment type="function">
    <text evidence="1">Excises uracil residues from the DNA which can arise as a result of misincorporation of dUMP residues by DNA polymerase or due to deamination of cytosine.</text>
</comment>
<comment type="catalytic activity">
    <reaction evidence="1">
        <text>Hydrolyzes single-stranded DNA or mismatched double-stranded DNA and polynucleotides, releasing free uracil.</text>
        <dbReference type="EC" id="3.2.2.27"/>
    </reaction>
</comment>
<comment type="subcellular location">
    <subcellularLocation>
        <location evidence="1">Cytoplasm</location>
    </subcellularLocation>
</comment>
<comment type="similarity">
    <text evidence="1">Belongs to the uracil-DNA glycosylase (UDG) superfamily. UNG family.</text>
</comment>
<organism>
    <name type="scientific">Mycobacterium sp. (strain JLS)</name>
    <dbReference type="NCBI Taxonomy" id="164757"/>
    <lineage>
        <taxon>Bacteria</taxon>
        <taxon>Bacillati</taxon>
        <taxon>Actinomycetota</taxon>
        <taxon>Actinomycetes</taxon>
        <taxon>Mycobacteriales</taxon>
        <taxon>Mycobacteriaceae</taxon>
        <taxon>Mycobacterium</taxon>
    </lineage>
</organism>
<accession>A3PXS4</accession>
<reference key="1">
    <citation type="submission" date="2007-02" db="EMBL/GenBank/DDBJ databases">
        <title>Complete sequence of Mycobacterium sp. JLS.</title>
        <authorList>
            <consortium name="US DOE Joint Genome Institute"/>
            <person name="Copeland A."/>
            <person name="Lucas S."/>
            <person name="Lapidus A."/>
            <person name="Barry K."/>
            <person name="Detter J.C."/>
            <person name="Glavina del Rio T."/>
            <person name="Hammon N."/>
            <person name="Israni S."/>
            <person name="Dalin E."/>
            <person name="Tice H."/>
            <person name="Pitluck S."/>
            <person name="Chain P."/>
            <person name="Malfatti S."/>
            <person name="Shin M."/>
            <person name="Vergez L."/>
            <person name="Schmutz J."/>
            <person name="Larimer F."/>
            <person name="Land M."/>
            <person name="Hauser L."/>
            <person name="Kyrpides N."/>
            <person name="Mikhailova N."/>
            <person name="Miller C.D."/>
            <person name="Anderson A.J."/>
            <person name="Sims R.C."/>
            <person name="Richardson P."/>
        </authorList>
    </citation>
    <scope>NUCLEOTIDE SEQUENCE [LARGE SCALE GENOMIC DNA]</scope>
    <source>
        <strain>JLS</strain>
    </source>
</reference>
<keyword id="KW-0963">Cytoplasm</keyword>
<keyword id="KW-0227">DNA damage</keyword>
<keyword id="KW-0234">DNA repair</keyword>
<keyword id="KW-0378">Hydrolase</keyword>
<protein>
    <recommendedName>
        <fullName evidence="1">Uracil-DNA glycosylase</fullName>
        <shortName evidence="1">UDG</shortName>
        <ecNumber evidence="1">3.2.2.27</ecNumber>
    </recommendedName>
</protein>
<dbReference type="EC" id="3.2.2.27" evidence="1"/>
<dbReference type="EMBL" id="CP000580">
    <property type="protein sequence ID" value="ABN97701.1"/>
    <property type="molecule type" value="Genomic_DNA"/>
</dbReference>
<dbReference type="SMR" id="A3PXS4"/>
<dbReference type="KEGG" id="mjl:Mjls_1913"/>
<dbReference type="HOGENOM" id="CLU_032162_3_1_11"/>
<dbReference type="BioCyc" id="MSP164757:G1G8C-1932-MONOMER"/>
<dbReference type="GO" id="GO:0005737">
    <property type="term" value="C:cytoplasm"/>
    <property type="evidence" value="ECO:0007669"/>
    <property type="project" value="UniProtKB-SubCell"/>
</dbReference>
<dbReference type="GO" id="GO:0004844">
    <property type="term" value="F:uracil DNA N-glycosylase activity"/>
    <property type="evidence" value="ECO:0007669"/>
    <property type="project" value="UniProtKB-UniRule"/>
</dbReference>
<dbReference type="GO" id="GO:0097510">
    <property type="term" value="P:base-excision repair, AP site formation via deaminated base removal"/>
    <property type="evidence" value="ECO:0007669"/>
    <property type="project" value="TreeGrafter"/>
</dbReference>
<dbReference type="CDD" id="cd10027">
    <property type="entry name" value="UDG-F1-like"/>
    <property type="match status" value="1"/>
</dbReference>
<dbReference type="FunFam" id="3.40.470.10:FF:000006">
    <property type="entry name" value="Uracil-DNA glycosylase"/>
    <property type="match status" value="1"/>
</dbReference>
<dbReference type="Gene3D" id="3.40.470.10">
    <property type="entry name" value="Uracil-DNA glycosylase-like domain"/>
    <property type="match status" value="1"/>
</dbReference>
<dbReference type="HAMAP" id="MF_00148">
    <property type="entry name" value="UDG"/>
    <property type="match status" value="1"/>
</dbReference>
<dbReference type="InterPro" id="IPR002043">
    <property type="entry name" value="UDG_fam1"/>
</dbReference>
<dbReference type="InterPro" id="IPR018085">
    <property type="entry name" value="Ura-DNA_Glyclase_AS"/>
</dbReference>
<dbReference type="InterPro" id="IPR005122">
    <property type="entry name" value="Uracil-DNA_glycosylase-like"/>
</dbReference>
<dbReference type="InterPro" id="IPR036895">
    <property type="entry name" value="Uracil-DNA_glycosylase-like_sf"/>
</dbReference>
<dbReference type="NCBIfam" id="NF003588">
    <property type="entry name" value="PRK05254.1-1"/>
    <property type="match status" value="1"/>
</dbReference>
<dbReference type="NCBIfam" id="NF003592">
    <property type="entry name" value="PRK05254.1-5"/>
    <property type="match status" value="1"/>
</dbReference>
<dbReference type="NCBIfam" id="TIGR00628">
    <property type="entry name" value="ung"/>
    <property type="match status" value="1"/>
</dbReference>
<dbReference type="PANTHER" id="PTHR11264">
    <property type="entry name" value="URACIL-DNA GLYCOSYLASE"/>
    <property type="match status" value="1"/>
</dbReference>
<dbReference type="PANTHER" id="PTHR11264:SF0">
    <property type="entry name" value="URACIL-DNA GLYCOSYLASE"/>
    <property type="match status" value="1"/>
</dbReference>
<dbReference type="Pfam" id="PF03167">
    <property type="entry name" value="UDG"/>
    <property type="match status" value="1"/>
</dbReference>
<dbReference type="SMART" id="SM00986">
    <property type="entry name" value="UDG"/>
    <property type="match status" value="1"/>
</dbReference>
<dbReference type="SMART" id="SM00987">
    <property type="entry name" value="UreE_C"/>
    <property type="match status" value="1"/>
</dbReference>
<dbReference type="SUPFAM" id="SSF52141">
    <property type="entry name" value="Uracil-DNA glycosylase-like"/>
    <property type="match status" value="1"/>
</dbReference>
<dbReference type="PROSITE" id="PS00130">
    <property type="entry name" value="U_DNA_GLYCOSYLASE"/>
    <property type="match status" value="1"/>
</dbReference>
<evidence type="ECO:0000255" key="1">
    <source>
        <dbReference type="HAMAP-Rule" id="MF_00148"/>
    </source>
</evidence>
<gene>
    <name evidence="1" type="primary">ung</name>
    <name type="ordered locus">Mjls_1913</name>
</gene>
<sequence length="227" mass="24621">MTARALSELVDQGWAQALEPVREQVAQMGEFLRAELAAGHRYLPAGANVLRAFSFPFDQVRVLIVGQDPYPTPGHAVGLSFSVDPEVRPLPRSLANIFTEYTADLGYPQPSNGDLSPWAQRGVLLLNRVLTVRPGTPASHRGKGWEAVTECAIRALVARDTPMVAVLWGRDAATLKPMLTGSACVAIESPHPSPLSASRGFFGSRPFSRANELLTQMGAEPIDWRLP</sequence>